<protein>
    <recommendedName>
        <fullName evidence="1">Imidazoleglycerol-phosphate dehydratase</fullName>
        <shortName evidence="1">IGPD</shortName>
        <ecNumber evidence="1">4.2.1.19</ecNumber>
    </recommendedName>
</protein>
<keyword id="KW-0028">Amino-acid biosynthesis</keyword>
<keyword id="KW-0963">Cytoplasm</keyword>
<keyword id="KW-0368">Histidine biosynthesis</keyword>
<keyword id="KW-0456">Lyase</keyword>
<comment type="catalytic activity">
    <reaction evidence="1">
        <text>D-erythro-1-(imidazol-4-yl)glycerol 3-phosphate = 3-(imidazol-4-yl)-2-oxopropyl phosphate + H2O</text>
        <dbReference type="Rhea" id="RHEA:11040"/>
        <dbReference type="ChEBI" id="CHEBI:15377"/>
        <dbReference type="ChEBI" id="CHEBI:57766"/>
        <dbReference type="ChEBI" id="CHEBI:58278"/>
        <dbReference type="EC" id="4.2.1.19"/>
    </reaction>
</comment>
<comment type="pathway">
    <text evidence="1">Amino-acid biosynthesis; L-histidine biosynthesis; L-histidine from 5-phospho-alpha-D-ribose 1-diphosphate: step 6/9.</text>
</comment>
<comment type="subcellular location">
    <subcellularLocation>
        <location evidence="1">Cytoplasm</location>
    </subcellularLocation>
</comment>
<comment type="similarity">
    <text evidence="1">Belongs to the imidazoleglycerol-phosphate dehydratase family.</text>
</comment>
<sequence>MRQSSQVRETKETKIKLNLQLDESTNVSIQTGVGFFDHMLTLFARHGRFGLQVEAEGDVFVDAHHTVEDVGIVLGNCLKEALQNKEGINRYGSAYVPMDESLGFVAIDISGRSYCVFQGELTNPKLGDFDTELTEEFFRAVAHAANITLHARVLYGSNTHHKIEALFKAFGRALREAVEKNANITGVNSTKGML</sequence>
<gene>
    <name evidence="1" type="primary">hisB</name>
    <name type="ordered locus">BCB4264_A1460</name>
</gene>
<feature type="chain" id="PRO_1000117079" description="Imidazoleglycerol-phosphate dehydratase">
    <location>
        <begin position="1"/>
        <end position="194"/>
    </location>
</feature>
<reference key="1">
    <citation type="submission" date="2008-10" db="EMBL/GenBank/DDBJ databases">
        <title>Genome sequence of Bacillus cereus B4264.</title>
        <authorList>
            <person name="Dodson R.J."/>
            <person name="Durkin A.S."/>
            <person name="Rosovitz M.J."/>
            <person name="Rasko D.A."/>
            <person name="Hoffmaster A."/>
            <person name="Ravel J."/>
            <person name="Sutton G."/>
        </authorList>
    </citation>
    <scope>NUCLEOTIDE SEQUENCE [LARGE SCALE GENOMIC DNA]</scope>
    <source>
        <strain>B4264</strain>
    </source>
</reference>
<dbReference type="EC" id="4.2.1.19" evidence="1"/>
<dbReference type="EMBL" id="CP001176">
    <property type="protein sequence ID" value="ACK63749.1"/>
    <property type="molecule type" value="Genomic_DNA"/>
</dbReference>
<dbReference type="RefSeq" id="WP_001249953.1">
    <property type="nucleotide sequence ID" value="NC_011725.1"/>
</dbReference>
<dbReference type="SMR" id="B7HHG2"/>
<dbReference type="KEGG" id="bcb:BCB4264_A1460"/>
<dbReference type="HOGENOM" id="CLU_044308_3_0_9"/>
<dbReference type="UniPathway" id="UPA00031">
    <property type="reaction ID" value="UER00011"/>
</dbReference>
<dbReference type="Proteomes" id="UP000007096">
    <property type="component" value="Chromosome"/>
</dbReference>
<dbReference type="GO" id="GO:0005737">
    <property type="term" value="C:cytoplasm"/>
    <property type="evidence" value="ECO:0007669"/>
    <property type="project" value="UniProtKB-SubCell"/>
</dbReference>
<dbReference type="GO" id="GO:0004424">
    <property type="term" value="F:imidazoleglycerol-phosphate dehydratase activity"/>
    <property type="evidence" value="ECO:0007669"/>
    <property type="project" value="UniProtKB-UniRule"/>
</dbReference>
<dbReference type="GO" id="GO:0000105">
    <property type="term" value="P:L-histidine biosynthetic process"/>
    <property type="evidence" value="ECO:0007669"/>
    <property type="project" value="UniProtKB-UniRule"/>
</dbReference>
<dbReference type="CDD" id="cd07914">
    <property type="entry name" value="IGPD"/>
    <property type="match status" value="1"/>
</dbReference>
<dbReference type="FunFam" id="3.30.230.40:FF:000001">
    <property type="entry name" value="Imidazoleglycerol-phosphate dehydratase HisB"/>
    <property type="match status" value="1"/>
</dbReference>
<dbReference type="FunFam" id="3.30.230.40:FF:000003">
    <property type="entry name" value="Imidazoleglycerol-phosphate dehydratase HisB"/>
    <property type="match status" value="1"/>
</dbReference>
<dbReference type="Gene3D" id="3.30.230.40">
    <property type="entry name" value="Imidazole glycerol phosphate dehydratase, domain 1"/>
    <property type="match status" value="2"/>
</dbReference>
<dbReference type="HAMAP" id="MF_00076">
    <property type="entry name" value="HisB"/>
    <property type="match status" value="1"/>
</dbReference>
<dbReference type="InterPro" id="IPR038494">
    <property type="entry name" value="IGPD_sf"/>
</dbReference>
<dbReference type="InterPro" id="IPR000807">
    <property type="entry name" value="ImidazoleglycerolP_deHydtase"/>
</dbReference>
<dbReference type="InterPro" id="IPR020565">
    <property type="entry name" value="ImidazoleglycerP_deHydtase_CS"/>
</dbReference>
<dbReference type="InterPro" id="IPR020568">
    <property type="entry name" value="Ribosomal_Su5_D2-typ_SF"/>
</dbReference>
<dbReference type="NCBIfam" id="NF002107">
    <property type="entry name" value="PRK00951.1-2"/>
    <property type="match status" value="1"/>
</dbReference>
<dbReference type="NCBIfam" id="NF002111">
    <property type="entry name" value="PRK00951.2-1"/>
    <property type="match status" value="1"/>
</dbReference>
<dbReference type="NCBIfam" id="NF002114">
    <property type="entry name" value="PRK00951.2-4"/>
    <property type="match status" value="1"/>
</dbReference>
<dbReference type="PANTHER" id="PTHR23133:SF2">
    <property type="entry name" value="IMIDAZOLEGLYCEROL-PHOSPHATE DEHYDRATASE"/>
    <property type="match status" value="1"/>
</dbReference>
<dbReference type="PANTHER" id="PTHR23133">
    <property type="entry name" value="IMIDAZOLEGLYCEROL-PHOSPHATE DEHYDRATASE HIS7"/>
    <property type="match status" value="1"/>
</dbReference>
<dbReference type="Pfam" id="PF00475">
    <property type="entry name" value="IGPD"/>
    <property type="match status" value="1"/>
</dbReference>
<dbReference type="SUPFAM" id="SSF54211">
    <property type="entry name" value="Ribosomal protein S5 domain 2-like"/>
    <property type="match status" value="2"/>
</dbReference>
<dbReference type="PROSITE" id="PS00954">
    <property type="entry name" value="IGP_DEHYDRATASE_1"/>
    <property type="match status" value="1"/>
</dbReference>
<dbReference type="PROSITE" id="PS00955">
    <property type="entry name" value="IGP_DEHYDRATASE_2"/>
    <property type="match status" value="1"/>
</dbReference>
<accession>B7HHG2</accession>
<name>HIS7_BACC4</name>
<evidence type="ECO:0000255" key="1">
    <source>
        <dbReference type="HAMAP-Rule" id="MF_00076"/>
    </source>
</evidence>
<organism>
    <name type="scientific">Bacillus cereus (strain B4264)</name>
    <dbReference type="NCBI Taxonomy" id="405532"/>
    <lineage>
        <taxon>Bacteria</taxon>
        <taxon>Bacillati</taxon>
        <taxon>Bacillota</taxon>
        <taxon>Bacilli</taxon>
        <taxon>Bacillales</taxon>
        <taxon>Bacillaceae</taxon>
        <taxon>Bacillus</taxon>
        <taxon>Bacillus cereus group</taxon>
    </lineage>
</organism>
<proteinExistence type="inferred from homology"/>